<name>PROB_SYNAS</name>
<protein>
    <recommendedName>
        <fullName evidence="1">Glutamate 5-kinase</fullName>
        <ecNumber evidence="1">2.7.2.11</ecNumber>
    </recommendedName>
    <alternativeName>
        <fullName evidence="1">Gamma-glutamyl kinase</fullName>
        <shortName evidence="1">GK</shortName>
    </alternativeName>
</protein>
<dbReference type="EC" id="2.7.2.11" evidence="1"/>
<dbReference type="EMBL" id="CP000252">
    <property type="protein sequence ID" value="ABC76586.1"/>
    <property type="molecule type" value="Genomic_DNA"/>
</dbReference>
<dbReference type="RefSeq" id="WP_011416620.1">
    <property type="nucleotide sequence ID" value="NC_007759.1"/>
</dbReference>
<dbReference type="SMR" id="Q2LR78"/>
<dbReference type="FunCoup" id="Q2LR78">
    <property type="interactions" value="349"/>
</dbReference>
<dbReference type="STRING" id="56780.SYN_01350"/>
<dbReference type="KEGG" id="sat:SYN_01350"/>
<dbReference type="eggNOG" id="COG0263">
    <property type="taxonomic scope" value="Bacteria"/>
</dbReference>
<dbReference type="HOGENOM" id="CLU_025400_2_0_7"/>
<dbReference type="InParanoid" id="Q2LR78"/>
<dbReference type="OrthoDB" id="9804434at2"/>
<dbReference type="UniPathway" id="UPA00098">
    <property type="reaction ID" value="UER00359"/>
</dbReference>
<dbReference type="Proteomes" id="UP000001933">
    <property type="component" value="Chromosome"/>
</dbReference>
<dbReference type="GO" id="GO:0005829">
    <property type="term" value="C:cytosol"/>
    <property type="evidence" value="ECO:0007669"/>
    <property type="project" value="TreeGrafter"/>
</dbReference>
<dbReference type="GO" id="GO:0005524">
    <property type="term" value="F:ATP binding"/>
    <property type="evidence" value="ECO:0007669"/>
    <property type="project" value="UniProtKB-KW"/>
</dbReference>
<dbReference type="GO" id="GO:0004349">
    <property type="term" value="F:glutamate 5-kinase activity"/>
    <property type="evidence" value="ECO:0007669"/>
    <property type="project" value="UniProtKB-UniRule"/>
</dbReference>
<dbReference type="GO" id="GO:0003723">
    <property type="term" value="F:RNA binding"/>
    <property type="evidence" value="ECO:0007669"/>
    <property type="project" value="InterPro"/>
</dbReference>
<dbReference type="GO" id="GO:0055129">
    <property type="term" value="P:L-proline biosynthetic process"/>
    <property type="evidence" value="ECO:0007669"/>
    <property type="project" value="UniProtKB-UniRule"/>
</dbReference>
<dbReference type="CDD" id="cd04242">
    <property type="entry name" value="AAK_G5K_ProB"/>
    <property type="match status" value="1"/>
</dbReference>
<dbReference type="CDD" id="cd21157">
    <property type="entry name" value="PUA_G5K"/>
    <property type="match status" value="1"/>
</dbReference>
<dbReference type="FunFam" id="2.30.130.10:FF:000007">
    <property type="entry name" value="Glutamate 5-kinase"/>
    <property type="match status" value="1"/>
</dbReference>
<dbReference type="FunFam" id="3.40.1160.10:FF:000018">
    <property type="entry name" value="Glutamate 5-kinase"/>
    <property type="match status" value="1"/>
</dbReference>
<dbReference type="Gene3D" id="3.40.1160.10">
    <property type="entry name" value="Acetylglutamate kinase-like"/>
    <property type="match status" value="1"/>
</dbReference>
<dbReference type="Gene3D" id="2.30.130.10">
    <property type="entry name" value="PUA domain"/>
    <property type="match status" value="1"/>
</dbReference>
<dbReference type="HAMAP" id="MF_00456">
    <property type="entry name" value="ProB"/>
    <property type="match status" value="1"/>
</dbReference>
<dbReference type="InterPro" id="IPR036393">
    <property type="entry name" value="AceGlu_kinase-like_sf"/>
</dbReference>
<dbReference type="InterPro" id="IPR001048">
    <property type="entry name" value="Asp/Glu/Uridylate_kinase"/>
</dbReference>
<dbReference type="InterPro" id="IPR041739">
    <property type="entry name" value="G5K_ProB"/>
</dbReference>
<dbReference type="InterPro" id="IPR001057">
    <property type="entry name" value="Glu/AcGlu_kinase"/>
</dbReference>
<dbReference type="InterPro" id="IPR011529">
    <property type="entry name" value="Glu_5kinase"/>
</dbReference>
<dbReference type="InterPro" id="IPR005715">
    <property type="entry name" value="Glu_5kinase/COase_Synthase"/>
</dbReference>
<dbReference type="InterPro" id="IPR019797">
    <property type="entry name" value="Glutamate_5-kinase_CS"/>
</dbReference>
<dbReference type="InterPro" id="IPR002478">
    <property type="entry name" value="PUA"/>
</dbReference>
<dbReference type="InterPro" id="IPR015947">
    <property type="entry name" value="PUA-like_sf"/>
</dbReference>
<dbReference type="InterPro" id="IPR036974">
    <property type="entry name" value="PUA_sf"/>
</dbReference>
<dbReference type="NCBIfam" id="TIGR01027">
    <property type="entry name" value="proB"/>
    <property type="match status" value="1"/>
</dbReference>
<dbReference type="PANTHER" id="PTHR43654">
    <property type="entry name" value="GLUTAMATE 5-KINASE"/>
    <property type="match status" value="1"/>
</dbReference>
<dbReference type="PANTHER" id="PTHR43654:SF1">
    <property type="entry name" value="ISOPENTENYL PHOSPHATE KINASE"/>
    <property type="match status" value="1"/>
</dbReference>
<dbReference type="Pfam" id="PF00696">
    <property type="entry name" value="AA_kinase"/>
    <property type="match status" value="1"/>
</dbReference>
<dbReference type="Pfam" id="PF01472">
    <property type="entry name" value="PUA"/>
    <property type="match status" value="1"/>
</dbReference>
<dbReference type="PIRSF" id="PIRSF000729">
    <property type="entry name" value="GK"/>
    <property type="match status" value="1"/>
</dbReference>
<dbReference type="PRINTS" id="PR00474">
    <property type="entry name" value="GLU5KINASE"/>
</dbReference>
<dbReference type="SMART" id="SM00359">
    <property type="entry name" value="PUA"/>
    <property type="match status" value="1"/>
</dbReference>
<dbReference type="SUPFAM" id="SSF53633">
    <property type="entry name" value="Carbamate kinase-like"/>
    <property type="match status" value="1"/>
</dbReference>
<dbReference type="SUPFAM" id="SSF88697">
    <property type="entry name" value="PUA domain-like"/>
    <property type="match status" value="1"/>
</dbReference>
<dbReference type="PROSITE" id="PS00902">
    <property type="entry name" value="GLUTAMATE_5_KINASE"/>
    <property type="match status" value="1"/>
</dbReference>
<dbReference type="PROSITE" id="PS50890">
    <property type="entry name" value="PUA"/>
    <property type="match status" value="1"/>
</dbReference>
<proteinExistence type="inferred from homology"/>
<accession>Q2LR78</accession>
<organism>
    <name type="scientific">Syntrophus aciditrophicus (strain SB)</name>
    <dbReference type="NCBI Taxonomy" id="56780"/>
    <lineage>
        <taxon>Bacteria</taxon>
        <taxon>Pseudomonadati</taxon>
        <taxon>Thermodesulfobacteriota</taxon>
        <taxon>Syntrophia</taxon>
        <taxon>Syntrophales</taxon>
        <taxon>Syntrophaceae</taxon>
        <taxon>Syntrophus</taxon>
    </lineage>
</organism>
<reference key="1">
    <citation type="journal article" date="2007" name="Proc. Natl. Acad. Sci. U.S.A.">
        <title>The genome of Syntrophus aciditrophicus: life at the thermodynamic limit of microbial growth.</title>
        <authorList>
            <person name="McInerney M.J."/>
            <person name="Rohlin L."/>
            <person name="Mouttaki H."/>
            <person name="Kim U."/>
            <person name="Krupp R.S."/>
            <person name="Rios-Hernandez L."/>
            <person name="Sieber J."/>
            <person name="Struchtemeyer C.G."/>
            <person name="Bhattacharyya A."/>
            <person name="Campbell J.W."/>
            <person name="Gunsalus R.P."/>
        </authorList>
    </citation>
    <scope>NUCLEOTIDE SEQUENCE [LARGE SCALE GENOMIC DNA]</scope>
    <source>
        <strain>SB</strain>
    </source>
</reference>
<gene>
    <name evidence="1" type="primary">proB</name>
    <name type="ordered locus">SYNAS_07070</name>
    <name type="ORF">SYN_01350</name>
</gene>
<keyword id="KW-0028">Amino-acid biosynthesis</keyword>
<keyword id="KW-0067">ATP-binding</keyword>
<keyword id="KW-0963">Cytoplasm</keyword>
<keyword id="KW-0418">Kinase</keyword>
<keyword id="KW-0547">Nucleotide-binding</keyword>
<keyword id="KW-0641">Proline biosynthesis</keyword>
<keyword id="KW-1185">Reference proteome</keyword>
<keyword id="KW-0808">Transferase</keyword>
<evidence type="ECO:0000255" key="1">
    <source>
        <dbReference type="HAMAP-Rule" id="MF_00456"/>
    </source>
</evidence>
<feature type="chain" id="PRO_0000253013" description="Glutamate 5-kinase">
    <location>
        <begin position="1"/>
        <end position="385"/>
    </location>
</feature>
<feature type="domain" description="PUA" evidence="1">
    <location>
        <begin position="283"/>
        <end position="361"/>
    </location>
</feature>
<feature type="binding site" evidence="1">
    <location>
        <position position="18"/>
    </location>
    <ligand>
        <name>ATP</name>
        <dbReference type="ChEBI" id="CHEBI:30616"/>
    </ligand>
</feature>
<feature type="binding site" evidence="1">
    <location>
        <position position="57"/>
    </location>
    <ligand>
        <name>substrate</name>
    </ligand>
</feature>
<feature type="binding site" evidence="1">
    <location>
        <position position="144"/>
    </location>
    <ligand>
        <name>substrate</name>
    </ligand>
</feature>
<feature type="binding site" evidence="1">
    <location>
        <position position="156"/>
    </location>
    <ligand>
        <name>substrate</name>
    </ligand>
</feature>
<feature type="binding site" evidence="1">
    <location>
        <begin position="218"/>
        <end position="224"/>
    </location>
    <ligand>
        <name>ATP</name>
        <dbReference type="ChEBI" id="CHEBI:30616"/>
    </ligand>
</feature>
<comment type="function">
    <text evidence="1">Catalyzes the transfer of a phosphate group to glutamate to form L-glutamate 5-phosphate.</text>
</comment>
<comment type="catalytic activity">
    <reaction evidence="1">
        <text>L-glutamate + ATP = L-glutamyl 5-phosphate + ADP</text>
        <dbReference type="Rhea" id="RHEA:14877"/>
        <dbReference type="ChEBI" id="CHEBI:29985"/>
        <dbReference type="ChEBI" id="CHEBI:30616"/>
        <dbReference type="ChEBI" id="CHEBI:58274"/>
        <dbReference type="ChEBI" id="CHEBI:456216"/>
        <dbReference type="EC" id="2.7.2.11"/>
    </reaction>
</comment>
<comment type="pathway">
    <text evidence="1">Amino-acid biosynthesis; L-proline biosynthesis; L-glutamate 5-semialdehyde from L-glutamate: step 1/2.</text>
</comment>
<comment type="subcellular location">
    <subcellularLocation>
        <location evidence="1">Cytoplasm</location>
    </subcellularLocation>
</comment>
<comment type="similarity">
    <text evidence="1">Belongs to the glutamate 5-kinase family.</text>
</comment>
<sequence length="385" mass="42139">MNENREQVLKNVKRVLIKIGSAVLTGDNGLDLERIQHLVDQMAALTHRGYQVVMVTSGAIASGKHRLGITTALKSIPQKQAAAAIGQGRLMRIYSNSFGKHGLYVGQILLTMSDLTDRRRFLNIRNTLSTLMEWGIIAIINENDTVAIDEIKFGDNDNLAAMIANIIEAHLVINLTSTPGLYDRNPASSRNARLIPLVREITEDIEAAASEEGTSVGTGGMKSKVMAAKKVTAFGIPYIIAPGKQKDVLLDIFDGNELGTLFLPMREHLSSRKYWIAFTLRSRGVLSIDAGARTAILEEGKSLLPSGIVGVEGDFIVGDPVTCVDRDGVPLAKGLVNYSAPDIRKIMGLKTSRIEQVLGHKDYDEIIHRDNLAVIRRSRRHREAG</sequence>